<name>HACE1_XENTR</name>
<reference key="1">
    <citation type="submission" date="2006-10" db="EMBL/GenBank/DDBJ databases">
        <authorList>
            <consortium name="Sanger Xenopus tropicalis EST/cDNA project"/>
        </authorList>
    </citation>
    <scope>NUCLEOTIDE SEQUENCE [LARGE SCALE MRNA] (ISOFORM 1)</scope>
    <source>
        <tissue>Egg</tissue>
    </source>
</reference>
<reference key="2">
    <citation type="journal article" date="2010" name="Science">
        <title>The genome of the Western clawed frog Xenopus tropicalis.</title>
        <authorList>
            <person name="Hellsten U."/>
            <person name="Harland R.M."/>
            <person name="Gilchrist M.J."/>
            <person name="Hendrix D."/>
            <person name="Jurka J."/>
            <person name="Kapitonov V."/>
            <person name="Ovcharenko I."/>
            <person name="Putnam N.H."/>
            <person name="Shu S."/>
            <person name="Taher L."/>
            <person name="Blitz I.L."/>
            <person name="Blumberg B."/>
            <person name="Dichmann D.S."/>
            <person name="Dubchak I."/>
            <person name="Amaya E."/>
            <person name="Detter J.C."/>
            <person name="Fletcher R."/>
            <person name="Gerhard D.S."/>
            <person name="Goodstein D."/>
            <person name="Graves T."/>
            <person name="Grigoriev I.V."/>
            <person name="Grimwood J."/>
            <person name="Kawashima T."/>
            <person name="Lindquist E."/>
            <person name="Lucas S.M."/>
            <person name="Mead P.E."/>
            <person name="Mitros T."/>
            <person name="Ogino H."/>
            <person name="Ohta Y."/>
            <person name="Poliakov A.V."/>
            <person name="Pollet N."/>
            <person name="Robert J."/>
            <person name="Salamov A."/>
            <person name="Sater A.K."/>
            <person name="Schmutz J."/>
            <person name="Terry A."/>
            <person name="Vize P.D."/>
            <person name="Warren W.C."/>
            <person name="Wells D."/>
            <person name="Wills A."/>
            <person name="Wilson R.K."/>
            <person name="Zimmerman L.B."/>
            <person name="Zorn A.M."/>
            <person name="Grainger R."/>
            <person name="Grammer T."/>
            <person name="Khokha M.K."/>
            <person name="Richardson P.M."/>
            <person name="Rokhsar D.S."/>
        </authorList>
    </citation>
    <scope>NUCLEOTIDE SEQUENCE [LARGE SCALE GENOMIC DNA]</scope>
</reference>
<organism>
    <name type="scientific">Xenopus tropicalis</name>
    <name type="common">Western clawed frog</name>
    <name type="synonym">Silurana tropicalis</name>
    <dbReference type="NCBI Taxonomy" id="8364"/>
    <lineage>
        <taxon>Eukaryota</taxon>
        <taxon>Metazoa</taxon>
        <taxon>Chordata</taxon>
        <taxon>Craniata</taxon>
        <taxon>Vertebrata</taxon>
        <taxon>Euteleostomi</taxon>
        <taxon>Amphibia</taxon>
        <taxon>Batrachia</taxon>
        <taxon>Anura</taxon>
        <taxon>Pipoidea</taxon>
        <taxon>Pipidae</taxon>
        <taxon>Xenopodinae</taxon>
        <taxon>Xenopus</taxon>
        <taxon>Silurana</taxon>
    </lineage>
</organism>
<accession>Q28BK1</accession>
<accession>G1K3F9</accession>
<keyword id="KW-0025">Alternative splicing</keyword>
<keyword id="KW-0040">ANK repeat</keyword>
<keyword id="KW-0131">Cell cycle</keyword>
<keyword id="KW-0963">Cytoplasm</keyword>
<keyword id="KW-0256">Endoplasmic reticulum</keyword>
<keyword id="KW-0333">Golgi apparatus</keyword>
<keyword id="KW-0472">Membrane</keyword>
<keyword id="KW-1185">Reference proteome</keyword>
<keyword id="KW-0677">Repeat</keyword>
<keyword id="KW-0808">Transferase</keyword>
<keyword id="KW-0833">Ubl conjugation pathway</keyword>
<protein>
    <recommendedName>
        <fullName>E3 ubiquitin-protein ligase HACE1</fullName>
        <ecNumber evidence="2">2.3.2.26</ecNumber>
    </recommendedName>
    <alternativeName>
        <fullName>HECT domain and ankyrin repeat-containing E3 ubiquitin-protein ligase 1</fullName>
    </alternativeName>
    <alternativeName>
        <fullName evidence="2">HECT-type E3 ubiquitin transferase HACE1</fullName>
    </alternativeName>
</protein>
<gene>
    <name type="primary">hace1</name>
    <name type="ORF">TEgg040h18.1</name>
</gene>
<proteinExistence type="evidence at transcript level"/>
<comment type="function">
    <text evidence="2">E3 ubiquitin-protein ligase involved in Golgi membrane fusion and regulation of small GTPases. Acts as a regulator of Golgi membrane dynamics during the cell cycle: recruited to Golgi membrane by Rab proteins and regulates postmitotic Golgi membrane fusion. Acts by mediating ubiquitination during mitotic Golgi disassembly, ubiquitination serving as a signal for Golgi reassembly later, after cell division.</text>
</comment>
<comment type="catalytic activity">
    <reaction evidence="2">
        <text>S-ubiquitinyl-[E2 ubiquitin-conjugating enzyme]-L-cysteine + [acceptor protein]-L-lysine = [E2 ubiquitin-conjugating enzyme]-L-cysteine + N(6)-ubiquitinyl-[acceptor protein]-L-lysine.</text>
        <dbReference type="EC" id="2.3.2.26"/>
    </reaction>
</comment>
<comment type="pathway">
    <text evidence="2">Protein modification; protein ubiquitination.</text>
</comment>
<comment type="subcellular location">
    <subcellularLocation>
        <location evidence="2">Golgi apparatus</location>
        <location evidence="2">Golgi stack membrane</location>
    </subcellularLocation>
    <subcellularLocation>
        <location evidence="1 2">Cytoplasm</location>
    </subcellularLocation>
    <subcellularLocation>
        <location evidence="2">Endoplasmic reticulum</location>
    </subcellularLocation>
</comment>
<comment type="alternative products">
    <event type="alternative splicing"/>
    <isoform>
        <id>Q28BK1-1</id>
        <name>1</name>
        <sequence type="displayed"/>
    </isoform>
    <isoform>
        <id>Q28BK1-2</id>
        <name>2</name>
        <sequence type="described" ref="VSP_042380"/>
    </isoform>
</comment>
<evidence type="ECO:0000250" key="1"/>
<evidence type="ECO:0000250" key="2">
    <source>
        <dbReference type="UniProtKB" id="Q8IYU2"/>
    </source>
</evidence>
<evidence type="ECO:0000255" key="3">
    <source>
        <dbReference type="PROSITE-ProRule" id="PRU00104"/>
    </source>
</evidence>
<evidence type="ECO:0000305" key="4"/>
<sequence length="912" mass="102876">MERAMEQLNRLTRSLRRARTVELPEDNETAVYTLMPMVMADQHRSVLELLSNSKFDVNYAFGRVKRSLLHIAANCGSVECLVLLLKRGADPNYQDISGCTPLHLAARNGQKKCMSKLLEYNADVNICNNEGLTAIHWLAVNGRTELLHDLVQHVTNVDVEDAMGQTALHVACQNGHKTTVLCLLDSGADINRPNVSGATPLYFACSHGQRDTAQILLLRGAKYLPDKNGVTPLDLCVQGGYGETCDILIQHHPRLFQTLIQMTQNEDLRENTLRQVLEHLSQQSEVQYLKILTGLAEVATTNGHKLLSISSSYEAQMKSLLRIVRIFCHVFRIGPSSPNNGNDMGYNGNKTPRNQVFKPLELLWHSLDEWLVLIATELTKNKRDSSNIACILLKQNQLDQQDISLAHQSAIGESGSYDHLSSSTRAEDFESCSAAGKQEPVADGQDVISMTANRLSAVIQAFYMCCSCQMPQGMTSPRFIEFVCKHDDVLKCFVTRNPKIIFDHFHFLLECPELMSRFMHIIKAQPFKERCEWFYEHLLAGQPDSDMVHRPVNENDILLVHRDSIFRSSCEVVFKSNCEKLKQGIAVRFHGEEGMGQGVVREWFDILSSEIINPDYALFTQSADGTTFQPNSNSSVNPDHLNYFRFAGEILGLALYHRQLVNIYFTRSFYKHILGIPVNYQDVASIDPEYAKNLQWILDNDISDLGLELTFSVETDVFGAMEEVPLKPGGASILVTQENKAEYVQLVTELRMTRAIQPQINGFLQGFHMFIPPSLIQLFDEYELELLLSGMPEIDVNDWMKNTEYTSGYERDDQVIQWFWEVVQELTQEERVLLLQFVTGSSRVPHGGFAYIMGGSGLQNFTIAAVAYTPNLLPTSSTCINMLKLPEYPSKEILKDRLLVALHCGSYGYTMA</sequence>
<dbReference type="EC" id="2.3.2.26" evidence="2"/>
<dbReference type="EMBL" id="CR942795">
    <property type="protein sequence ID" value="CAJ83645.1"/>
    <property type="molecule type" value="mRNA"/>
</dbReference>
<dbReference type="EMBL" id="AAMC01096447">
    <property type="status" value="NOT_ANNOTATED_CDS"/>
    <property type="molecule type" value="Genomic_DNA"/>
</dbReference>
<dbReference type="EMBL" id="AAMC01096448">
    <property type="status" value="NOT_ANNOTATED_CDS"/>
    <property type="molecule type" value="Genomic_DNA"/>
</dbReference>
<dbReference type="EMBL" id="AAMC01096449">
    <property type="status" value="NOT_ANNOTATED_CDS"/>
    <property type="molecule type" value="Genomic_DNA"/>
</dbReference>
<dbReference type="EMBL" id="AAMC01096450">
    <property type="status" value="NOT_ANNOTATED_CDS"/>
    <property type="molecule type" value="Genomic_DNA"/>
</dbReference>
<dbReference type="EMBL" id="AAMC01096451">
    <property type="status" value="NOT_ANNOTATED_CDS"/>
    <property type="molecule type" value="Genomic_DNA"/>
</dbReference>
<dbReference type="EMBL" id="AAMC01096452">
    <property type="status" value="NOT_ANNOTATED_CDS"/>
    <property type="molecule type" value="Genomic_DNA"/>
</dbReference>
<dbReference type="EMBL" id="AAMC01096453">
    <property type="status" value="NOT_ANNOTATED_CDS"/>
    <property type="molecule type" value="Genomic_DNA"/>
</dbReference>
<dbReference type="EMBL" id="AAMC01096454">
    <property type="status" value="NOT_ANNOTATED_CDS"/>
    <property type="molecule type" value="Genomic_DNA"/>
</dbReference>
<dbReference type="EMBL" id="AAMC01096455">
    <property type="status" value="NOT_ANNOTATED_CDS"/>
    <property type="molecule type" value="Genomic_DNA"/>
</dbReference>
<dbReference type="EMBL" id="AAMC01096456">
    <property type="status" value="NOT_ANNOTATED_CDS"/>
    <property type="molecule type" value="Genomic_DNA"/>
</dbReference>
<dbReference type="RefSeq" id="NP_001039269.1">
    <molecule id="Q28BK1-1"/>
    <property type="nucleotide sequence ID" value="NM_001045804.2"/>
</dbReference>
<dbReference type="SMR" id="Q28BK1"/>
<dbReference type="FunCoup" id="Q28BK1">
    <property type="interactions" value="3924"/>
</dbReference>
<dbReference type="STRING" id="8364.ENSXETP00000033525"/>
<dbReference type="PaxDb" id="8364-ENSXETP00000029095"/>
<dbReference type="GeneID" id="734146"/>
<dbReference type="KEGG" id="xtr:734146"/>
<dbReference type="AGR" id="Xenbase:XB-GENE-5757512"/>
<dbReference type="CTD" id="57531"/>
<dbReference type="Xenbase" id="XB-GENE-5757512">
    <property type="gene designation" value="hace1"/>
</dbReference>
<dbReference type="eggNOG" id="KOG0939">
    <property type="taxonomic scope" value="Eukaryota"/>
</dbReference>
<dbReference type="eggNOG" id="KOG4177">
    <property type="taxonomic scope" value="Eukaryota"/>
</dbReference>
<dbReference type="HOGENOM" id="CLU_015878_0_0_1"/>
<dbReference type="InParanoid" id="Q28BK1"/>
<dbReference type="OrthoDB" id="8068875at2759"/>
<dbReference type="TreeFam" id="TF323417"/>
<dbReference type="Reactome" id="R-XTR-983168">
    <property type="pathway name" value="Antigen processing: Ubiquitination &amp; Proteasome degradation"/>
</dbReference>
<dbReference type="UniPathway" id="UPA00143"/>
<dbReference type="Proteomes" id="UP000008143">
    <property type="component" value="Chromosome 5"/>
</dbReference>
<dbReference type="GO" id="GO:0005783">
    <property type="term" value="C:endoplasmic reticulum"/>
    <property type="evidence" value="ECO:0007669"/>
    <property type="project" value="UniProtKB-SubCell"/>
</dbReference>
<dbReference type="GO" id="GO:0032580">
    <property type="term" value="C:Golgi cisterna membrane"/>
    <property type="evidence" value="ECO:0007669"/>
    <property type="project" value="UniProtKB-SubCell"/>
</dbReference>
<dbReference type="GO" id="GO:0000139">
    <property type="term" value="C:Golgi membrane"/>
    <property type="evidence" value="ECO:0000250"/>
    <property type="project" value="UniProtKB"/>
</dbReference>
<dbReference type="GO" id="GO:0031267">
    <property type="term" value="F:small GTPase binding"/>
    <property type="evidence" value="ECO:0000250"/>
    <property type="project" value="UniProtKB"/>
</dbReference>
<dbReference type="GO" id="GO:0004842">
    <property type="term" value="F:ubiquitin-protein transferase activity"/>
    <property type="evidence" value="ECO:0000250"/>
    <property type="project" value="UniProtKB"/>
</dbReference>
<dbReference type="GO" id="GO:0007030">
    <property type="term" value="P:Golgi organization"/>
    <property type="evidence" value="ECO:0000250"/>
    <property type="project" value="UniProtKB"/>
</dbReference>
<dbReference type="GO" id="GO:0061025">
    <property type="term" value="P:membrane fusion"/>
    <property type="evidence" value="ECO:0000250"/>
    <property type="project" value="UniProtKB"/>
</dbReference>
<dbReference type="GO" id="GO:0070936">
    <property type="term" value="P:protein K48-linked ubiquitination"/>
    <property type="evidence" value="ECO:0000250"/>
    <property type="project" value="UniProtKB"/>
</dbReference>
<dbReference type="GO" id="GO:0016567">
    <property type="term" value="P:protein ubiquitination"/>
    <property type="evidence" value="ECO:0000250"/>
    <property type="project" value="UniProtKB"/>
</dbReference>
<dbReference type="GO" id="GO:0030334">
    <property type="term" value="P:regulation of cell migration"/>
    <property type="evidence" value="ECO:0000250"/>
    <property type="project" value="UniProtKB"/>
</dbReference>
<dbReference type="GO" id="GO:0006511">
    <property type="term" value="P:ubiquitin-dependent protein catabolic process"/>
    <property type="evidence" value="ECO:0000250"/>
    <property type="project" value="UniProtKB"/>
</dbReference>
<dbReference type="CDD" id="cd00078">
    <property type="entry name" value="HECTc"/>
    <property type="match status" value="1"/>
</dbReference>
<dbReference type="FunFam" id="3.90.1750.10:FF:000026">
    <property type="entry name" value="E3 ubiquitin-protein ligase HACE1"/>
    <property type="match status" value="1"/>
</dbReference>
<dbReference type="FunFam" id="1.25.40.20:FF:000051">
    <property type="entry name" value="E3 ubiquitin-protein ligase HACE1 isoform X1"/>
    <property type="match status" value="1"/>
</dbReference>
<dbReference type="FunFam" id="3.30.2410.10:FF:000016">
    <property type="entry name" value="E3 ubiquitin-protein ligase HACE1 isoform X1"/>
    <property type="match status" value="1"/>
</dbReference>
<dbReference type="FunFam" id="3.90.1750.10:FF:000019">
    <property type="entry name" value="E3 ubiquitin-protein ligase HACE1 isoform X1"/>
    <property type="match status" value="1"/>
</dbReference>
<dbReference type="FunFam" id="3.30.2160.10:FF:000001">
    <property type="entry name" value="E3 ubiquitin-protein ligase NEDD4-like"/>
    <property type="match status" value="1"/>
</dbReference>
<dbReference type="FunFam" id="1.25.40.20:FF:000256">
    <property type="entry name" value="HECT domain and ankyrin repeat containing E3 ubiquitin protein ligase 1"/>
    <property type="match status" value="1"/>
</dbReference>
<dbReference type="Gene3D" id="1.25.40.20">
    <property type="entry name" value="Ankyrin repeat-containing domain"/>
    <property type="match status" value="2"/>
</dbReference>
<dbReference type="Gene3D" id="3.30.2160.10">
    <property type="entry name" value="Hect, E3 ligase catalytic domain"/>
    <property type="match status" value="1"/>
</dbReference>
<dbReference type="Gene3D" id="3.30.2410.10">
    <property type="entry name" value="Hect, E3 ligase catalytic domain"/>
    <property type="match status" value="1"/>
</dbReference>
<dbReference type="Gene3D" id="3.90.1750.10">
    <property type="entry name" value="Hect, E3 ligase catalytic domains"/>
    <property type="match status" value="1"/>
</dbReference>
<dbReference type="InterPro" id="IPR002110">
    <property type="entry name" value="Ankyrin_rpt"/>
</dbReference>
<dbReference type="InterPro" id="IPR036770">
    <property type="entry name" value="Ankyrin_rpt-contain_sf"/>
</dbReference>
<dbReference type="InterPro" id="IPR050409">
    <property type="entry name" value="E3_ubiq-protein_ligase"/>
</dbReference>
<dbReference type="InterPro" id="IPR000569">
    <property type="entry name" value="HECT_dom"/>
</dbReference>
<dbReference type="InterPro" id="IPR035983">
    <property type="entry name" value="Hect_E3_ubiquitin_ligase"/>
</dbReference>
<dbReference type="PANTHER" id="PTHR11254:SF363">
    <property type="entry name" value="E3 UBIQUITIN-PROTEIN LIGASE HACE1"/>
    <property type="match status" value="1"/>
</dbReference>
<dbReference type="PANTHER" id="PTHR11254">
    <property type="entry name" value="HECT DOMAIN UBIQUITIN-PROTEIN LIGASE"/>
    <property type="match status" value="1"/>
</dbReference>
<dbReference type="Pfam" id="PF00023">
    <property type="entry name" value="Ank"/>
    <property type="match status" value="1"/>
</dbReference>
<dbReference type="Pfam" id="PF12796">
    <property type="entry name" value="Ank_2"/>
    <property type="match status" value="2"/>
</dbReference>
<dbReference type="Pfam" id="PF00632">
    <property type="entry name" value="HECT"/>
    <property type="match status" value="1"/>
</dbReference>
<dbReference type="PRINTS" id="PR01415">
    <property type="entry name" value="ANKYRIN"/>
</dbReference>
<dbReference type="SMART" id="SM00248">
    <property type="entry name" value="ANK"/>
    <property type="match status" value="6"/>
</dbReference>
<dbReference type="SMART" id="SM00119">
    <property type="entry name" value="HECTc"/>
    <property type="match status" value="1"/>
</dbReference>
<dbReference type="SUPFAM" id="SSF48403">
    <property type="entry name" value="Ankyrin repeat"/>
    <property type="match status" value="1"/>
</dbReference>
<dbReference type="SUPFAM" id="SSF56204">
    <property type="entry name" value="Hect, E3 ligase catalytic domain"/>
    <property type="match status" value="1"/>
</dbReference>
<dbReference type="PROSITE" id="PS50297">
    <property type="entry name" value="ANK_REP_REGION"/>
    <property type="match status" value="1"/>
</dbReference>
<dbReference type="PROSITE" id="PS50088">
    <property type="entry name" value="ANK_REPEAT"/>
    <property type="match status" value="5"/>
</dbReference>
<dbReference type="PROSITE" id="PS50237">
    <property type="entry name" value="HECT"/>
    <property type="match status" value="1"/>
</dbReference>
<feature type="chain" id="PRO_0000280625" description="E3 ubiquitin-protein ligase HACE1">
    <location>
        <begin position="1"/>
        <end position="912"/>
    </location>
</feature>
<feature type="repeat" description="ANK 1" evidence="2">
    <location>
        <begin position="23"/>
        <end position="55"/>
    </location>
</feature>
<feature type="repeat" description="ANK 2" evidence="2">
    <location>
        <begin position="64"/>
        <end position="93"/>
    </location>
</feature>
<feature type="repeat" description="ANK 3" evidence="2">
    <location>
        <begin position="97"/>
        <end position="126"/>
    </location>
</feature>
<feature type="repeat" description="ANK 4" evidence="2">
    <location>
        <begin position="130"/>
        <end position="159"/>
    </location>
</feature>
<feature type="repeat" description="ANK 5" evidence="2">
    <location>
        <begin position="163"/>
        <end position="192"/>
    </location>
</feature>
<feature type="repeat" description="ANK 6" evidence="2">
    <location>
        <begin position="196"/>
        <end position="226"/>
    </location>
</feature>
<feature type="repeat" description="ANK 7" evidence="2">
    <location>
        <begin position="228"/>
        <end position="253"/>
    </location>
</feature>
<feature type="domain" description="HECT" evidence="3">
    <location>
        <begin position="577"/>
        <end position="912"/>
    </location>
</feature>
<feature type="active site" description="Glycyl thioester intermediate" evidence="3">
    <location>
        <position position="879"/>
    </location>
</feature>
<feature type="splice variant" id="VSP_042380" description="In isoform 2." evidence="4">
    <original>K</original>
    <variation>KVRNVYDVFRKINIKEMNLPNHTLIYQATSEQD</variation>
    <location>
        <position position="358"/>
    </location>
</feature>